<name>PB2_I66A1</name>
<dbReference type="EMBL" id="DQ067437">
    <property type="protein sequence ID" value="AAY52771.1"/>
    <property type="molecule type" value="Genomic_RNA"/>
</dbReference>
<dbReference type="EMBL" id="CY014670">
    <property type="protein sequence ID" value="ABI84533.1"/>
    <property type="molecule type" value="Genomic_RNA"/>
</dbReference>
<dbReference type="SMR" id="Q0A449"/>
<dbReference type="PRO" id="PR:Q0A449"/>
<dbReference type="Proteomes" id="UP000115522">
    <property type="component" value="Genome"/>
</dbReference>
<dbReference type="GO" id="GO:0042025">
    <property type="term" value="C:host cell nucleus"/>
    <property type="evidence" value="ECO:0007669"/>
    <property type="project" value="UniProtKB-SubCell"/>
</dbReference>
<dbReference type="GO" id="GO:0044423">
    <property type="term" value="C:virion component"/>
    <property type="evidence" value="ECO:0007669"/>
    <property type="project" value="UniProtKB-UniRule"/>
</dbReference>
<dbReference type="GO" id="GO:0003723">
    <property type="term" value="F:RNA binding"/>
    <property type="evidence" value="ECO:0007669"/>
    <property type="project" value="UniProtKB-UniRule"/>
</dbReference>
<dbReference type="GO" id="GO:0003968">
    <property type="term" value="F:RNA-directed RNA polymerase activity"/>
    <property type="evidence" value="ECO:0007669"/>
    <property type="project" value="UniProtKB-UniRule"/>
</dbReference>
<dbReference type="GO" id="GO:0006370">
    <property type="term" value="P:7-methylguanosine mRNA capping"/>
    <property type="evidence" value="ECO:0007669"/>
    <property type="project" value="UniProtKB-UniRule"/>
</dbReference>
<dbReference type="GO" id="GO:0075526">
    <property type="term" value="P:cap snatching"/>
    <property type="evidence" value="ECO:0007669"/>
    <property type="project" value="UniProtKB-UniRule"/>
</dbReference>
<dbReference type="GO" id="GO:0006351">
    <property type="term" value="P:DNA-templated transcription"/>
    <property type="evidence" value="ECO:0007669"/>
    <property type="project" value="UniProtKB-UniRule"/>
</dbReference>
<dbReference type="GO" id="GO:0039657">
    <property type="term" value="P:symbiont-mediated suppression of host gene expression"/>
    <property type="evidence" value="ECO:0007669"/>
    <property type="project" value="UniProtKB-KW"/>
</dbReference>
<dbReference type="GO" id="GO:0039523">
    <property type="term" value="P:symbiont-mediated suppression of host mRNA transcription via inhibition of RNA polymerase II activity"/>
    <property type="evidence" value="ECO:0007669"/>
    <property type="project" value="UniProtKB-UniRule"/>
</dbReference>
<dbReference type="GO" id="GO:0039694">
    <property type="term" value="P:viral RNA genome replication"/>
    <property type="evidence" value="ECO:0007669"/>
    <property type="project" value="InterPro"/>
</dbReference>
<dbReference type="FunFam" id="3.30.30.90:FF:000001">
    <property type="entry name" value="Polymerase basic protein 2"/>
    <property type="match status" value="1"/>
</dbReference>
<dbReference type="Gene3D" id="3.30.30.90">
    <property type="entry name" value="Polymerase Basic Protein 2, C-terminal domain"/>
    <property type="match status" value="1"/>
</dbReference>
<dbReference type="HAMAP" id="MF_04062">
    <property type="entry name" value="INV_PB2"/>
    <property type="match status" value="1"/>
</dbReference>
<dbReference type="InterPro" id="IPR049110">
    <property type="entry name" value="Flu_PB2_2nd"/>
</dbReference>
<dbReference type="InterPro" id="IPR049114">
    <property type="entry name" value="Flu_PB2_6th"/>
</dbReference>
<dbReference type="InterPro" id="IPR049115">
    <property type="entry name" value="Flu_PB2_C"/>
</dbReference>
<dbReference type="InterPro" id="IPR048298">
    <property type="entry name" value="Flu_PB2_CAP-bd"/>
</dbReference>
<dbReference type="InterPro" id="IPR049111">
    <property type="entry name" value="Flu_PB2_middle"/>
</dbReference>
<dbReference type="InterPro" id="IPR049106">
    <property type="entry name" value="Flu_PB2_N"/>
</dbReference>
<dbReference type="InterPro" id="IPR001591">
    <property type="entry name" value="INV_PB2"/>
</dbReference>
<dbReference type="InterPro" id="IPR049113">
    <property type="entry name" value="PB2_helical"/>
</dbReference>
<dbReference type="InterPro" id="IPR037258">
    <property type="entry name" value="PDB2_C"/>
</dbReference>
<dbReference type="Pfam" id="PF20947">
    <property type="entry name" value="Flu_PB2_1st"/>
    <property type="match status" value="1"/>
</dbReference>
<dbReference type="Pfam" id="PF20948">
    <property type="entry name" value="Flu_PB2_2nd"/>
    <property type="match status" value="1"/>
</dbReference>
<dbReference type="Pfam" id="PF20949">
    <property type="entry name" value="Flu_PB2_3rd"/>
    <property type="match status" value="1"/>
</dbReference>
<dbReference type="Pfam" id="PF20950">
    <property type="entry name" value="Flu_PB2_4th"/>
    <property type="match status" value="1"/>
</dbReference>
<dbReference type="Pfam" id="PF00604">
    <property type="entry name" value="Flu_PB2_5th"/>
    <property type="match status" value="1"/>
</dbReference>
<dbReference type="Pfam" id="PF20951">
    <property type="entry name" value="Flu_PB2_6th"/>
    <property type="match status" value="1"/>
</dbReference>
<dbReference type="Pfam" id="PF20952">
    <property type="entry name" value="Flu_PB2_7th"/>
    <property type="match status" value="1"/>
</dbReference>
<dbReference type="SUPFAM" id="SSF160453">
    <property type="entry name" value="PB2 C-terminal domain-like"/>
    <property type="match status" value="1"/>
</dbReference>
<gene>
    <name evidence="1" type="primary">PB2</name>
</gene>
<reference key="1">
    <citation type="journal article" date="2005" name="Virology">
        <title>Evolution of H9N2 influenza viruses from domestic poultry in Mainland China.</title>
        <authorList>
            <person name="Li C."/>
            <person name="Yu K."/>
            <person name="Tian G."/>
            <person name="Yu D."/>
            <person name="Liu L."/>
            <person name="Jing B."/>
            <person name="Ping J."/>
            <person name="Chen H."/>
        </authorList>
    </citation>
    <scope>NUCLEOTIDE SEQUENCE [GENOMIC RNA]</scope>
</reference>
<reference key="2">
    <citation type="journal article" date="2006" name="Science">
        <title>Large-scale sequence analysis of avian influenza isolates.</title>
        <authorList>
            <person name="Obenauer J.C."/>
            <person name="Denson J."/>
            <person name="Mehta P.K."/>
            <person name="Su X."/>
            <person name="Mukatira S."/>
            <person name="Finkelstein D.B."/>
            <person name="Xu X."/>
            <person name="Wang J."/>
            <person name="Ma J."/>
            <person name="Fan Y."/>
            <person name="Rakestraw K.M."/>
            <person name="Webster R.G."/>
            <person name="Hoffmann E."/>
            <person name="Krauss S."/>
            <person name="Zheng J."/>
            <person name="Zhang Z."/>
            <person name="Naeve C.W."/>
        </authorList>
    </citation>
    <scope>NUCLEOTIDE SEQUENCE [GENOMIC RNA]</scope>
</reference>
<organismHost>
    <name type="scientific">Aves</name>
    <dbReference type="NCBI Taxonomy" id="8782"/>
</organismHost>
<protein>
    <recommendedName>
        <fullName evidence="1">Polymerase basic protein 2</fullName>
    </recommendedName>
    <alternativeName>
        <fullName evidence="1">RNA-directed RNA polymerase subunit P3</fullName>
    </alternativeName>
</protein>
<proteinExistence type="inferred from homology"/>
<accession>Q0A449</accession>
<accession>Q3SBF6</accession>
<organism>
    <name type="scientific">Influenza A virus (strain A/Turkey/Wisconsin/1/1966 H9N2)</name>
    <dbReference type="NCBI Taxonomy" id="385620"/>
    <lineage>
        <taxon>Viruses</taxon>
        <taxon>Riboviria</taxon>
        <taxon>Orthornavirae</taxon>
        <taxon>Negarnaviricota</taxon>
        <taxon>Polyploviricotina</taxon>
        <taxon>Insthoviricetes</taxon>
        <taxon>Articulavirales</taxon>
        <taxon>Orthomyxoviridae</taxon>
        <taxon>Alphainfluenzavirus</taxon>
        <taxon>Alphainfluenzavirus influenzae</taxon>
        <taxon>Influenza A virus</taxon>
    </lineage>
</organism>
<feature type="chain" id="PRO_0000279649" description="Polymerase basic protein 2">
    <location>
        <begin position="1"/>
        <end position="759"/>
    </location>
</feature>
<feature type="short sequence motif" description="Nuclear localization signal" evidence="1">
    <location>
        <begin position="736"/>
        <end position="739"/>
    </location>
</feature>
<feature type="site" description="Avian adaptation" evidence="1">
    <location>
        <position position="627"/>
    </location>
</feature>
<feature type="sequence conflict" description="In Ref. 1; AAY52771." ref="1">
    <original>N</original>
    <variation>K</variation>
    <location>
        <position position="148"/>
    </location>
</feature>
<feature type="sequence conflict" description="In Ref. 1; AAY52771." ref="1">
    <original>T</original>
    <variation>A</variation>
    <location>
        <position position="333"/>
    </location>
</feature>
<feature type="sequence conflict" description="In Ref. 1; AAY52771." ref="1">
    <original>E</original>
    <variation>V</variation>
    <location>
        <position position="396"/>
    </location>
</feature>
<feature type="sequence conflict" description="In Ref. 1; AAY52771." ref="1">
    <original>IET</original>
    <variation>VEH</variation>
    <location>
        <begin position="451"/>
        <end position="453"/>
    </location>
</feature>
<feature type="sequence conflict" description="In Ref. 1; AAY52771." ref="1">
    <original>M</original>
    <variation>I</variation>
    <location>
        <position position="458"/>
    </location>
</feature>
<feature type="sequence conflict" description="In Ref. 1; AAY52771." ref="1">
    <original>I</original>
    <variation>V</variation>
    <location>
        <position position="478"/>
    </location>
</feature>
<feature type="sequence conflict" description="In Ref. 1; AAY52771." ref="1">
    <original>L</original>
    <variation>Q</variation>
    <location>
        <position position="507"/>
    </location>
</feature>
<feature type="sequence conflict" description="In Ref. 1; AAY52771." ref="1">
    <original>A</original>
    <variation>T</variation>
    <location>
        <position position="559"/>
    </location>
</feature>
<feature type="sequence conflict" description="In Ref. 1; AAY52771." ref="1">
    <original>I</original>
    <variation>L</variation>
    <location>
        <position position="607"/>
    </location>
</feature>
<feature type="sequence conflict" description="In Ref. 1; AAY52771." ref="1">
    <original>S</original>
    <variation>R</variation>
    <location>
        <position position="629"/>
    </location>
</feature>
<feature type="sequence conflict" description="In Ref. 1; AAY52771." ref="1">
    <original>S</original>
    <variation>N</variation>
    <location>
        <position position="659"/>
    </location>
</feature>
<evidence type="ECO:0000255" key="1">
    <source>
        <dbReference type="HAMAP-Rule" id="MF_04062"/>
    </source>
</evidence>
<sequence>MERIKELRDLMSQSRTREILTKTTVDHMAIIKKYTSGRQEKNPALRMKWMMAMKYPITADKRIMEMIPERNEQGQTLWSKTNDAGSDRVMVSPLAVTWWNRNGPTTSTVHYPKVYKTYFEKVERLKHGTFGPVHFRNQVKIRRRVDINPGHADLSAKEAQDVIMEVVFPNEVGARILTSESQLTITKEKKEELQDCKIAPLMVAYMLERELVRKTRFLPVAGGTSSVYIEVLHLTQGTCWEQMYTPGGEVRNDDVDQSLIIAARNIVRRAMVSADPLASLLEMCHSTQIGGIRMVDILRQNPTEEQAVDICKAAMGLRISSSFSFGGFTFKRTSGSSVKREEEVLTGNLQTLKIRVHEGYEEFTMVGRRATAILRKATRRLIQLIVGGRDEQSIAEAIIVAMVFSQEDCMIKAVRGDLNFVNRANQRLNPMHQLLRHFQKDAKVLFQNWGIETIDNVMGMIGILPDMTPSTEMSLRGIRVSKMGVDEYSSTERVVVSIDRFLRVRDLRGNVLLSPEEVSETQGTEKLTITYSSSMMWEINGPESVLVNTYQWIIRNWEAVKIQWSQDPTMLYNKMEFEPFQSLVPKAARGQYSGFVRTLFQQMRDVIGTFDTVQIIKLLPFAAAPPEQSRMQFSSLTVNVRGSGMRILVRGNSPVFNYSKATKRLTVLGKDAGALTEDPDEGTAGVESAVLRGFLILGKEDKRYGPALSINELSNLAKGEKANVLIGQGDVVLVMKRKRDSSILTDSQTATKRIRMAIN</sequence>
<comment type="function">
    <text evidence="1">Plays an essential role in transcription initiation and cap-stealing mechanism, in which cellular capped pre-mRNAs are used to generate primers for viral transcription. Recognizes and binds the 7-methylguanosine-containing cap of the target pre-RNA which is subsequently cleaved after 10-13 nucleotides by the viral protein PA. Plays a role in the initiation of the viral genome replication and modulates the activity of the ribonucleoprotein (RNP) complex.</text>
</comment>
<comment type="subunit">
    <text evidence="1">Influenza RNA polymerase is composed of three subunits: PB1, PB2 and PA. Interacts (via N-terminus) with PB1 (via C-terminus). Interacts with nucleoprotein NP (via N-terminus).</text>
</comment>
<comment type="subcellular location">
    <subcellularLocation>
        <location evidence="1">Virion</location>
    </subcellularLocation>
    <subcellularLocation>
        <location evidence="1">Host nucleus</location>
    </subcellularLocation>
</comment>
<comment type="similarity">
    <text evidence="1">Belongs to the influenza viruses PB2 family.</text>
</comment>
<keyword id="KW-1157">Cap snatching</keyword>
<keyword id="KW-1262">Eukaryotic host gene expression shutoff by virus</keyword>
<keyword id="KW-1191">Eukaryotic host transcription shutoff by virus</keyword>
<keyword id="KW-1190">Host gene expression shutoff by virus</keyword>
<keyword id="KW-1048">Host nucleus</keyword>
<keyword id="KW-0945">Host-virus interaction</keyword>
<keyword id="KW-1104">Inhibition of host RNA polymerase II by virus</keyword>
<keyword id="KW-0506">mRNA capping</keyword>
<keyword id="KW-0507">mRNA processing</keyword>
<keyword id="KW-1195">Viral transcription</keyword>
<keyword id="KW-0946">Virion</keyword>